<protein>
    <recommendedName>
        <fullName>cAMP-independent regulatory protein pac2</fullName>
    </recommendedName>
</protein>
<feature type="chain" id="PRO_0000058166" description="cAMP-independent regulatory protein pac2">
    <location>
        <begin position="1"/>
        <end position="235"/>
    </location>
</feature>
<feature type="region of interest" description="Disordered" evidence="1">
    <location>
        <begin position="85"/>
        <end position="128"/>
    </location>
</feature>
<feature type="compositionally biased region" description="Polar residues" evidence="1">
    <location>
        <begin position="102"/>
        <end position="118"/>
    </location>
</feature>
<evidence type="ECO:0000256" key="1">
    <source>
        <dbReference type="SAM" id="MobiDB-lite"/>
    </source>
</evidence>
<evidence type="ECO:0000305" key="2"/>
<keyword id="KW-0131">Cell cycle</keyword>
<keyword id="KW-0469">Meiosis</keyword>
<keyword id="KW-1185">Reference proteome</keyword>
<proteinExistence type="evidence at transcript level"/>
<comment type="function">
    <text>Controls the onset of sexual development, by inhibiting the expression of ste11, in a pathway that is independent of the cAMP cascade.</text>
</comment>
<comment type="similarity">
    <text evidence="2">To yeast YEL007w and to the N-terminal of S.pombe gti1.</text>
</comment>
<gene>
    <name type="primary">pac2</name>
    <name type="ORF">SPAC31G5.11</name>
</gene>
<dbReference type="EMBL" id="D43748">
    <property type="protein sequence ID" value="BAA07805.1"/>
    <property type="molecule type" value="mRNA"/>
</dbReference>
<dbReference type="EMBL" id="AB084888">
    <property type="protein sequence ID" value="BAC54908.1"/>
    <property type="molecule type" value="mRNA"/>
</dbReference>
<dbReference type="EMBL" id="CU329670">
    <property type="protein sequence ID" value="CAB11695.1"/>
    <property type="molecule type" value="Genomic_DNA"/>
</dbReference>
<dbReference type="PIR" id="S55723">
    <property type="entry name" value="S55723"/>
</dbReference>
<dbReference type="RefSeq" id="NP_594011.1">
    <property type="nucleotide sequence ID" value="NM_001019437.1"/>
</dbReference>
<dbReference type="SMR" id="Q10294"/>
<dbReference type="BioGRID" id="278579">
    <property type="interactions" value="79"/>
</dbReference>
<dbReference type="STRING" id="284812.Q10294"/>
<dbReference type="iPTMnet" id="Q10294"/>
<dbReference type="PaxDb" id="4896-SPAC31G5.11.1"/>
<dbReference type="EnsemblFungi" id="SPAC31G5.11.1">
    <property type="protein sequence ID" value="SPAC31G5.11.1:pep"/>
    <property type="gene ID" value="SPAC31G5.11"/>
</dbReference>
<dbReference type="GeneID" id="2542103"/>
<dbReference type="KEGG" id="spo:2542103"/>
<dbReference type="PomBase" id="SPAC31G5.11">
    <property type="gene designation" value="pac2"/>
</dbReference>
<dbReference type="VEuPathDB" id="FungiDB:SPAC31G5.11"/>
<dbReference type="eggNOG" id="KOG4476">
    <property type="taxonomic scope" value="Eukaryota"/>
</dbReference>
<dbReference type="HOGENOM" id="CLU_028895_3_1_1"/>
<dbReference type="InParanoid" id="Q10294"/>
<dbReference type="OMA" id="HEYTSIS"/>
<dbReference type="PhylomeDB" id="Q10294"/>
<dbReference type="PRO" id="PR:Q10294"/>
<dbReference type="Proteomes" id="UP000002485">
    <property type="component" value="Chromosome I"/>
</dbReference>
<dbReference type="GO" id="GO:0005829">
    <property type="term" value="C:cytosol"/>
    <property type="evidence" value="ECO:0007005"/>
    <property type="project" value="PomBase"/>
</dbReference>
<dbReference type="GO" id="GO:0044732">
    <property type="term" value="C:mitotic spindle pole body"/>
    <property type="evidence" value="ECO:0007005"/>
    <property type="project" value="PomBase"/>
</dbReference>
<dbReference type="GO" id="GO:0005634">
    <property type="term" value="C:nucleus"/>
    <property type="evidence" value="ECO:0007005"/>
    <property type="project" value="PomBase"/>
</dbReference>
<dbReference type="GO" id="GO:0051321">
    <property type="term" value="P:meiotic cell cycle"/>
    <property type="evidence" value="ECO:0007669"/>
    <property type="project" value="UniProtKB-KW"/>
</dbReference>
<dbReference type="GO" id="GO:0031138">
    <property type="term" value="P:negative regulation of conjugation with cellular fusion"/>
    <property type="evidence" value="ECO:0000315"/>
    <property type="project" value="PomBase"/>
</dbReference>
<dbReference type="GO" id="GO:0007165">
    <property type="term" value="P:signal transduction"/>
    <property type="evidence" value="ECO:0000303"/>
    <property type="project" value="PomBase"/>
</dbReference>
<dbReference type="InterPro" id="IPR018608">
    <property type="entry name" value="Gti1/Pac2"/>
</dbReference>
<dbReference type="PANTHER" id="PTHR28027:SF1">
    <property type="entry name" value="CAMP INDEPENDENT REGULATORY PROTEIN (AFU_ORTHOLOGUE AFUA_3G09640)"/>
    <property type="match status" value="1"/>
</dbReference>
<dbReference type="PANTHER" id="PTHR28027">
    <property type="entry name" value="TRANSCRIPTIONAL REGULATOR MIT1"/>
    <property type="match status" value="1"/>
</dbReference>
<dbReference type="Pfam" id="PF09729">
    <property type="entry name" value="Gti1_Pac2"/>
    <property type="match status" value="1"/>
</dbReference>
<name>PAC2_SCHPO</name>
<organism>
    <name type="scientific">Schizosaccharomyces pombe (strain 972 / ATCC 24843)</name>
    <name type="common">Fission yeast</name>
    <dbReference type="NCBI Taxonomy" id="284812"/>
    <lineage>
        <taxon>Eukaryota</taxon>
        <taxon>Fungi</taxon>
        <taxon>Dikarya</taxon>
        <taxon>Ascomycota</taxon>
        <taxon>Taphrinomycotina</taxon>
        <taxon>Schizosaccharomycetes</taxon>
        <taxon>Schizosaccharomycetales</taxon>
        <taxon>Schizosaccharomycetaceae</taxon>
        <taxon>Schizosaccharomyces</taxon>
    </lineage>
</organism>
<accession>Q10294</accession>
<sequence length="235" mass="26106">MQTYTGIIKTPLDAIILFEACRIGLLPRVQRRLSDHERSLIRAGSVFVWDEREAGMRRWTDGKSWSASRVSGSFLTYREMEGKRKPYHHGLSTDGSLKRSPSADTTGNSSLNAYSNEDSGAASLSDEESVDDENLRGLHYKPNGLIKQSFSITTSLNHKLHLISYSSPIPDPSLVTPSSDVNLSRITIPYGLYPDAGPPLVQAPKFLAPYDILVEKVACSEDARVLDKLRQALWL</sequence>
<reference key="1">
    <citation type="journal article" date="1995" name="Curr. Genet.">
        <title>Schizosaccharomyces pombe pac2+ controls the onset of sexual development via a pathway independent of the cAMP cascade.</title>
        <authorList>
            <person name="Kunitomo H."/>
            <person name="Sugimoto A."/>
            <person name="Wilkinson C.R.M."/>
            <person name="Yamamoto M."/>
        </authorList>
    </citation>
    <scope>NUCLEOTIDE SEQUENCE [MRNA]</scope>
</reference>
<reference key="2">
    <citation type="submission" date="2002-05" db="EMBL/GenBank/DDBJ databases">
        <title>Identification of abundant polyA plus non-coding RNAs that are expressed in Schizosaccharomyces pombe.</title>
        <authorList>
            <person name="Watanabe T."/>
            <person name="Saito T.T."/>
            <person name="Nabeshima K."/>
            <person name="Nojima H."/>
        </authorList>
    </citation>
    <scope>NUCLEOTIDE SEQUENCE [MRNA]</scope>
    <source>
        <strain>CD16-1</strain>
    </source>
</reference>
<reference key="3">
    <citation type="journal article" date="2002" name="Nature">
        <title>The genome sequence of Schizosaccharomyces pombe.</title>
        <authorList>
            <person name="Wood V."/>
            <person name="Gwilliam R."/>
            <person name="Rajandream M.A."/>
            <person name="Lyne M.H."/>
            <person name="Lyne R."/>
            <person name="Stewart A."/>
            <person name="Sgouros J.G."/>
            <person name="Peat N."/>
            <person name="Hayles J."/>
            <person name="Baker S.G."/>
            <person name="Basham D."/>
            <person name="Bowman S."/>
            <person name="Brooks K."/>
            <person name="Brown D."/>
            <person name="Brown S."/>
            <person name="Chillingworth T."/>
            <person name="Churcher C.M."/>
            <person name="Collins M."/>
            <person name="Connor R."/>
            <person name="Cronin A."/>
            <person name="Davis P."/>
            <person name="Feltwell T."/>
            <person name="Fraser A."/>
            <person name="Gentles S."/>
            <person name="Goble A."/>
            <person name="Hamlin N."/>
            <person name="Harris D.E."/>
            <person name="Hidalgo J."/>
            <person name="Hodgson G."/>
            <person name="Holroyd S."/>
            <person name="Hornsby T."/>
            <person name="Howarth S."/>
            <person name="Huckle E.J."/>
            <person name="Hunt S."/>
            <person name="Jagels K."/>
            <person name="James K.D."/>
            <person name="Jones L."/>
            <person name="Jones M."/>
            <person name="Leather S."/>
            <person name="McDonald S."/>
            <person name="McLean J."/>
            <person name="Mooney P."/>
            <person name="Moule S."/>
            <person name="Mungall K.L."/>
            <person name="Murphy L.D."/>
            <person name="Niblett D."/>
            <person name="Odell C."/>
            <person name="Oliver K."/>
            <person name="O'Neil S."/>
            <person name="Pearson D."/>
            <person name="Quail M.A."/>
            <person name="Rabbinowitsch E."/>
            <person name="Rutherford K.M."/>
            <person name="Rutter S."/>
            <person name="Saunders D."/>
            <person name="Seeger K."/>
            <person name="Sharp S."/>
            <person name="Skelton J."/>
            <person name="Simmonds M.N."/>
            <person name="Squares R."/>
            <person name="Squares S."/>
            <person name="Stevens K."/>
            <person name="Taylor K."/>
            <person name="Taylor R.G."/>
            <person name="Tivey A."/>
            <person name="Walsh S.V."/>
            <person name="Warren T."/>
            <person name="Whitehead S."/>
            <person name="Woodward J.R."/>
            <person name="Volckaert G."/>
            <person name="Aert R."/>
            <person name="Robben J."/>
            <person name="Grymonprez B."/>
            <person name="Weltjens I."/>
            <person name="Vanstreels E."/>
            <person name="Rieger M."/>
            <person name="Schaefer M."/>
            <person name="Mueller-Auer S."/>
            <person name="Gabel C."/>
            <person name="Fuchs M."/>
            <person name="Duesterhoeft A."/>
            <person name="Fritzc C."/>
            <person name="Holzer E."/>
            <person name="Moestl D."/>
            <person name="Hilbert H."/>
            <person name="Borzym K."/>
            <person name="Langer I."/>
            <person name="Beck A."/>
            <person name="Lehrach H."/>
            <person name="Reinhardt R."/>
            <person name="Pohl T.M."/>
            <person name="Eger P."/>
            <person name="Zimmermann W."/>
            <person name="Wedler H."/>
            <person name="Wambutt R."/>
            <person name="Purnelle B."/>
            <person name="Goffeau A."/>
            <person name="Cadieu E."/>
            <person name="Dreano S."/>
            <person name="Gloux S."/>
            <person name="Lelaure V."/>
            <person name="Mottier S."/>
            <person name="Galibert F."/>
            <person name="Aves S.J."/>
            <person name="Xiang Z."/>
            <person name="Hunt C."/>
            <person name="Moore K."/>
            <person name="Hurst S.M."/>
            <person name="Lucas M."/>
            <person name="Rochet M."/>
            <person name="Gaillardin C."/>
            <person name="Tallada V.A."/>
            <person name="Garzon A."/>
            <person name="Thode G."/>
            <person name="Daga R.R."/>
            <person name="Cruzado L."/>
            <person name="Jimenez J."/>
            <person name="Sanchez M."/>
            <person name="del Rey F."/>
            <person name="Benito J."/>
            <person name="Dominguez A."/>
            <person name="Revuelta J.L."/>
            <person name="Moreno S."/>
            <person name="Armstrong J."/>
            <person name="Forsburg S.L."/>
            <person name="Cerutti L."/>
            <person name="Lowe T."/>
            <person name="McCombie W.R."/>
            <person name="Paulsen I."/>
            <person name="Potashkin J."/>
            <person name="Shpakovski G.V."/>
            <person name="Ussery D."/>
            <person name="Barrell B.G."/>
            <person name="Nurse P."/>
        </authorList>
    </citation>
    <scope>NUCLEOTIDE SEQUENCE [LARGE SCALE GENOMIC DNA]</scope>
    <source>
        <strain>972 / ATCC 24843</strain>
    </source>
</reference>